<keyword id="KW-0067">ATP-binding</keyword>
<keyword id="KW-0418">Kinase</keyword>
<keyword id="KW-0547">Nucleotide-binding</keyword>
<keyword id="KW-1185">Reference proteome</keyword>
<keyword id="KW-0723">Serine/threonine-protein kinase</keyword>
<keyword id="KW-0808">Transferase</keyword>
<feature type="chain" id="PRO_0000086191" description="Protein kinase ORF74">
    <location>
        <begin position="1"/>
        <end position="673"/>
    </location>
</feature>
<feature type="domain" description="Protein kinase" evidence="1">
    <location>
        <begin position="128"/>
        <end position="404"/>
    </location>
</feature>
<feature type="region of interest" description="Disordered" evidence="2">
    <location>
        <begin position="340"/>
        <end position="364"/>
    </location>
</feature>
<feature type="compositionally biased region" description="Basic and acidic residues" evidence="2">
    <location>
        <begin position="345"/>
        <end position="355"/>
    </location>
</feature>
<feature type="active site" description="Proton acceptor" evidence="1">
    <location>
        <position position="252"/>
    </location>
</feature>
<name>KR74_ICHVA</name>
<protein>
    <recommendedName>
        <fullName>Protein kinase ORF74</fullName>
        <ecNumber>2.7.11.1</ecNumber>
    </recommendedName>
</protein>
<accession>Q00095</accession>
<evidence type="ECO:0000255" key="1">
    <source>
        <dbReference type="PROSITE-ProRule" id="PRU00159"/>
    </source>
</evidence>
<evidence type="ECO:0000256" key="2">
    <source>
        <dbReference type="SAM" id="MobiDB-lite"/>
    </source>
</evidence>
<comment type="catalytic activity">
    <reaction>
        <text>L-seryl-[protein] + ATP = O-phospho-L-seryl-[protein] + ADP + H(+)</text>
        <dbReference type="Rhea" id="RHEA:17989"/>
        <dbReference type="Rhea" id="RHEA-COMP:9863"/>
        <dbReference type="Rhea" id="RHEA-COMP:11604"/>
        <dbReference type="ChEBI" id="CHEBI:15378"/>
        <dbReference type="ChEBI" id="CHEBI:29999"/>
        <dbReference type="ChEBI" id="CHEBI:30616"/>
        <dbReference type="ChEBI" id="CHEBI:83421"/>
        <dbReference type="ChEBI" id="CHEBI:456216"/>
        <dbReference type="EC" id="2.7.11.1"/>
    </reaction>
</comment>
<comment type="catalytic activity">
    <reaction>
        <text>L-threonyl-[protein] + ATP = O-phospho-L-threonyl-[protein] + ADP + H(+)</text>
        <dbReference type="Rhea" id="RHEA:46608"/>
        <dbReference type="Rhea" id="RHEA-COMP:11060"/>
        <dbReference type="Rhea" id="RHEA-COMP:11605"/>
        <dbReference type="ChEBI" id="CHEBI:15378"/>
        <dbReference type="ChEBI" id="CHEBI:30013"/>
        <dbReference type="ChEBI" id="CHEBI:30616"/>
        <dbReference type="ChEBI" id="CHEBI:61977"/>
        <dbReference type="ChEBI" id="CHEBI:456216"/>
        <dbReference type="EC" id="2.7.11.1"/>
    </reaction>
</comment>
<comment type="similarity">
    <text evidence="1">Belongs to the protein kinase superfamily. Ser/Thr protein kinase family.</text>
</comment>
<gene>
    <name type="primary">ORF74</name>
</gene>
<organism>
    <name type="scientific">Ictalurid herpesvirus 1 (strain Auburn)</name>
    <name type="common">IcHV-1</name>
    <name type="synonym">Channel catfish herpesvirus</name>
    <dbReference type="NCBI Taxonomy" id="766178"/>
    <lineage>
        <taxon>Viruses</taxon>
        <taxon>Duplodnaviria</taxon>
        <taxon>Heunggongvirae</taxon>
        <taxon>Peploviricota</taxon>
        <taxon>Herviviricetes</taxon>
        <taxon>Herpesvirales</taxon>
        <taxon>Alloherpesviridae</taxon>
        <taxon>Ictavirus</taxon>
        <taxon>Ictavirus ictaluridallo1</taxon>
        <taxon>Ictalurid herpesvirus 1</taxon>
    </lineage>
</organism>
<reference key="1">
    <citation type="journal article" date="1992" name="Virology">
        <title>Channel catfish virus: a new type of herpesvirus.</title>
        <authorList>
            <person name="Davison A.J."/>
        </authorList>
    </citation>
    <scope>NUCLEOTIDE SEQUENCE [LARGE SCALE GENOMIC DNA]</scope>
    <source>
        <strain>Auburn 1</strain>
    </source>
</reference>
<proteinExistence type="inferred from homology"/>
<organismHost>
    <name type="scientific">Ictaluridae</name>
    <name type="common">bullhead catfishes</name>
    <dbReference type="NCBI Taxonomy" id="7996"/>
</organismHost>
<dbReference type="EC" id="2.7.11.1"/>
<dbReference type="EMBL" id="M75136">
    <property type="protein sequence ID" value="AAA88176.1"/>
    <property type="molecule type" value="Genomic_DNA"/>
</dbReference>
<dbReference type="PIR" id="I36793">
    <property type="entry name" value="TVBEI5"/>
</dbReference>
<dbReference type="RefSeq" id="NP_041164.1">
    <property type="nucleotide sequence ID" value="NC_001493.2"/>
</dbReference>
<dbReference type="GeneID" id="1488364"/>
<dbReference type="KEGG" id="vg:1488364"/>
<dbReference type="Proteomes" id="UP000007643">
    <property type="component" value="Segment"/>
</dbReference>
<dbReference type="GO" id="GO:0005524">
    <property type="term" value="F:ATP binding"/>
    <property type="evidence" value="ECO:0007669"/>
    <property type="project" value="UniProtKB-KW"/>
</dbReference>
<dbReference type="GO" id="GO:0106310">
    <property type="term" value="F:protein serine kinase activity"/>
    <property type="evidence" value="ECO:0007669"/>
    <property type="project" value="RHEA"/>
</dbReference>
<dbReference type="GO" id="GO:0004674">
    <property type="term" value="F:protein serine/threonine kinase activity"/>
    <property type="evidence" value="ECO:0007669"/>
    <property type="project" value="UniProtKB-KW"/>
</dbReference>
<dbReference type="GO" id="GO:0007165">
    <property type="term" value="P:signal transduction"/>
    <property type="evidence" value="ECO:0007669"/>
    <property type="project" value="TreeGrafter"/>
</dbReference>
<dbReference type="Gene3D" id="1.10.510.10">
    <property type="entry name" value="Transferase(Phosphotransferase) domain 1"/>
    <property type="match status" value="1"/>
</dbReference>
<dbReference type="InterPro" id="IPR011009">
    <property type="entry name" value="Kinase-like_dom_sf"/>
</dbReference>
<dbReference type="InterPro" id="IPR052751">
    <property type="entry name" value="Plant_MAPKKK"/>
</dbReference>
<dbReference type="InterPro" id="IPR000719">
    <property type="entry name" value="Prot_kinase_dom"/>
</dbReference>
<dbReference type="PANTHER" id="PTHR48011">
    <property type="entry name" value="CCR4-NOT TRANSCRIPTIONAL COMPLEX SUBUNIT CAF120-RELATED"/>
    <property type="match status" value="1"/>
</dbReference>
<dbReference type="PANTHER" id="PTHR48011:SF4">
    <property type="entry name" value="MITOGEN-ACTIVATED PROTEIN KINASE KINASE KINASE 19"/>
    <property type="match status" value="1"/>
</dbReference>
<dbReference type="Pfam" id="PF00069">
    <property type="entry name" value="Pkinase"/>
    <property type="match status" value="1"/>
</dbReference>
<dbReference type="SMART" id="SM00220">
    <property type="entry name" value="S_TKc"/>
    <property type="match status" value="1"/>
</dbReference>
<dbReference type="SUPFAM" id="SSF56112">
    <property type="entry name" value="Protein kinase-like (PK-like)"/>
    <property type="match status" value="1"/>
</dbReference>
<dbReference type="PROSITE" id="PS50011">
    <property type="entry name" value="PROTEIN_KINASE_DOM"/>
    <property type="match status" value="1"/>
</dbReference>
<sequence>MSGKVEINEPLIVATSAPLRCNCTGGSHFHGKTIANRALGSSQLMKCYSGLLKRCVRREKYIPVSDRGFLDAYTPQTAPGIVFTGSSLVTDSTLMMAPFNFHRQHVLPLEENFGLERARGDVTVDIRTDTDEAVARGLRSDMYERDAVGHIVSKPQKRTTGEMLDELMMTARLSHGNLVRFLGGVACEETRGGKITVKMVELGLCNLDEFIAEPHWIAPKFAIVRQYTLCKLERDTLSGLEYLHMHGVVHGDFRGAKVIVFPTADDFTFKVNLGESTSLGIAPALSRAPYHRAPETEFTGLIGREADMWAWALTMYRAHTCKDFFKKGDPSEPYRVLGPMDNDALDSRRTGRDGDPVNPEGFGTRLEKNATAVDGGFIGLMGKCLALYPQFRPTARELLVYPRYATLHRISGPGPAPPPVIGAAPAVRVVSNAVEFRSRWGVRPSPAMDPRLEARTSWGKNAVRAVGDFTPSFLYREGGLGDTRPGNKRAITLSRGTLRSYVGTENRLTTEIHRSGGADIVLHKVVGRRPDISRANLEYVMKVSNGFPEWYITIDHYTVGVTNVHLYVGYITDDIVYASAIGLSCPLRVDILKGFEKSTLRVDLMGILVTRGLAYTLRVIRHLKSASIYEAGPHAVGLVFVNPSSRNRFGTVSCDSVKLELGDEPSQLITGSR</sequence>